<name>SHO1_VERA1</name>
<dbReference type="EMBL" id="DS985215">
    <property type="protein sequence ID" value="EEY16218.1"/>
    <property type="molecule type" value="Genomic_DNA"/>
</dbReference>
<dbReference type="RefSeq" id="XP_003008139.1">
    <property type="nucleotide sequence ID" value="XM_003008093.1"/>
</dbReference>
<dbReference type="SMR" id="C9SA05"/>
<dbReference type="STRING" id="526221.C9SA05"/>
<dbReference type="GeneID" id="9532611"/>
<dbReference type="KEGG" id="val:VDBG_02327"/>
<dbReference type="eggNOG" id="ENOG502QW7A">
    <property type="taxonomic scope" value="Eukaryota"/>
</dbReference>
<dbReference type="HOGENOM" id="CLU_043316_1_0_1"/>
<dbReference type="OMA" id="NIVWIFY"/>
<dbReference type="OrthoDB" id="5983572at2759"/>
<dbReference type="Proteomes" id="UP000008698">
    <property type="component" value="Unassembled WGS sequence"/>
</dbReference>
<dbReference type="GO" id="GO:0005886">
    <property type="term" value="C:plasma membrane"/>
    <property type="evidence" value="ECO:0007669"/>
    <property type="project" value="UniProtKB-SubCell"/>
</dbReference>
<dbReference type="CDD" id="cd11855">
    <property type="entry name" value="SH3_Sho1p"/>
    <property type="match status" value="1"/>
</dbReference>
<dbReference type="FunFam" id="2.30.30.40:FF:000213">
    <property type="entry name" value="High osmolarity signaling protein SHO1"/>
    <property type="match status" value="1"/>
</dbReference>
<dbReference type="Gene3D" id="2.30.30.40">
    <property type="entry name" value="SH3 Domains"/>
    <property type="match status" value="1"/>
</dbReference>
<dbReference type="InterPro" id="IPR036028">
    <property type="entry name" value="SH3-like_dom_sf"/>
</dbReference>
<dbReference type="InterPro" id="IPR001452">
    <property type="entry name" value="SH3_domain"/>
</dbReference>
<dbReference type="InterPro" id="IPR035522">
    <property type="entry name" value="Sho1_SH3"/>
</dbReference>
<dbReference type="Pfam" id="PF00018">
    <property type="entry name" value="SH3_1"/>
    <property type="match status" value="1"/>
</dbReference>
<dbReference type="PRINTS" id="PR00452">
    <property type="entry name" value="SH3DOMAIN"/>
</dbReference>
<dbReference type="SMART" id="SM00326">
    <property type="entry name" value="SH3"/>
    <property type="match status" value="1"/>
</dbReference>
<dbReference type="SUPFAM" id="SSF50044">
    <property type="entry name" value="SH3-domain"/>
    <property type="match status" value="1"/>
</dbReference>
<dbReference type="PROSITE" id="PS50002">
    <property type="entry name" value="SH3"/>
    <property type="match status" value="1"/>
</dbReference>
<comment type="function">
    <text evidence="1">Plasma membrane osmosensor that activates the high osmolarity glycerol (HOG) MAPK signaling pathway in response to high osmolarity.</text>
</comment>
<comment type="subunit">
    <text evidence="1">Forms homooligomers.</text>
</comment>
<comment type="subcellular location">
    <subcellularLocation>
        <location evidence="1">Cell membrane</location>
        <topology evidence="1">Multi-pass membrane protein</topology>
    </subcellularLocation>
</comment>
<comment type="similarity">
    <text evidence="5">Belongs to the SHO1 family.</text>
</comment>
<accession>C9SA05</accession>
<reference key="1">
    <citation type="journal article" date="2011" name="PLoS Pathog.">
        <title>Comparative genomics yields insights into niche adaptation of plant vascular wilt pathogens.</title>
        <authorList>
            <person name="Klosterman S.J."/>
            <person name="Subbarao K.V."/>
            <person name="Kang S."/>
            <person name="Veronese P."/>
            <person name="Gold S.E."/>
            <person name="Thomma B.P.H.J."/>
            <person name="Chen Z."/>
            <person name="Henrissat B."/>
            <person name="Lee Y.-H."/>
            <person name="Park J."/>
            <person name="Garcia-Pedrajas M.D."/>
            <person name="Barbara D.J."/>
            <person name="Anchieta A."/>
            <person name="de Jonge R."/>
            <person name="Santhanam P."/>
            <person name="Maruthachalam K."/>
            <person name="Atallah Z."/>
            <person name="Amyotte S.G."/>
            <person name="Paz Z."/>
            <person name="Inderbitzin P."/>
            <person name="Hayes R.J."/>
            <person name="Heiman D.I."/>
            <person name="Young S."/>
            <person name="Zeng Q."/>
            <person name="Engels R."/>
            <person name="Galagan J."/>
            <person name="Cuomo C.A."/>
            <person name="Dobinson K.F."/>
            <person name="Ma L.-J."/>
        </authorList>
    </citation>
    <scope>NUCLEOTIDE SEQUENCE [LARGE SCALE GENOMIC DNA]</scope>
    <source>
        <strain>VaMs.102 / ATCC MYA-4576 / FGSC 10136</strain>
    </source>
</reference>
<feature type="chain" id="PRO_0000410406" description="High osmolarity signaling protein SHO1">
    <location>
        <begin position="1"/>
        <end position="293"/>
    </location>
</feature>
<feature type="topological domain" description="Cytoplasmic" evidence="2">
    <location>
        <begin position="1"/>
        <end position="22"/>
    </location>
</feature>
<feature type="transmembrane region" description="Helical" evidence="2">
    <location>
        <begin position="23"/>
        <end position="43"/>
    </location>
</feature>
<feature type="topological domain" description="Extracellular" evidence="2">
    <location>
        <begin position="44"/>
        <end position="54"/>
    </location>
</feature>
<feature type="transmembrane region" description="Helical" evidence="2">
    <location>
        <begin position="55"/>
        <end position="75"/>
    </location>
</feature>
<feature type="topological domain" description="Cytoplasmic" evidence="2">
    <location>
        <begin position="76"/>
        <end position="80"/>
    </location>
</feature>
<feature type="transmembrane region" description="Helical" evidence="2">
    <location>
        <begin position="81"/>
        <end position="101"/>
    </location>
</feature>
<feature type="topological domain" description="Extracellular" evidence="2">
    <location>
        <begin position="102"/>
        <end position="113"/>
    </location>
</feature>
<feature type="transmembrane region" description="Helical" evidence="2">
    <location>
        <begin position="114"/>
        <end position="134"/>
    </location>
</feature>
<feature type="topological domain" description="Cytoplasmic" evidence="2">
    <location>
        <begin position="135"/>
        <end position="293"/>
    </location>
</feature>
<feature type="domain" description="SH3" evidence="3">
    <location>
        <begin position="234"/>
        <end position="293"/>
    </location>
</feature>
<feature type="region of interest" description="Disordered" evidence="4">
    <location>
        <begin position="155"/>
        <end position="233"/>
    </location>
</feature>
<feature type="compositionally biased region" description="Polar residues" evidence="4">
    <location>
        <begin position="157"/>
        <end position="189"/>
    </location>
</feature>
<feature type="compositionally biased region" description="Polar residues" evidence="4">
    <location>
        <begin position="197"/>
        <end position="217"/>
    </location>
</feature>
<proteinExistence type="inferred from homology"/>
<sequence length="293" mass="31531">MEHSRAQYGRRGMNMGNVIGDPFALASISIAMLAWVIAFISSIVAAVQTNDLPNLAWWILALEVGIVGAVFFVIASDTIQTYHVALTAYQTLALATLSILLNRIVYDGRGAMQAASAGYVLLSVVMALWMIYFGSAPSASPRAYVDSFALQKEGHGSRNTMTYGTGRPETSTSVQPPQMYTSAQLNGFENPSPVGGISQSQAPRNSAVPNLNSTGVTANGKPPGQDQEVGPPTEYPYRAKAIYSYEANPEDANEISFSKHEILEVSDVSGRWWQARKESGDTGIAPSNYLILL</sequence>
<evidence type="ECO:0000250" key="1"/>
<evidence type="ECO:0000255" key="2"/>
<evidence type="ECO:0000255" key="3">
    <source>
        <dbReference type="PROSITE-ProRule" id="PRU00192"/>
    </source>
</evidence>
<evidence type="ECO:0000256" key="4">
    <source>
        <dbReference type="SAM" id="MobiDB-lite"/>
    </source>
</evidence>
<evidence type="ECO:0000305" key="5"/>
<organism>
    <name type="scientific">Verticillium alfalfae (strain VaMs.102 / ATCC MYA-4576 / FGSC 10136)</name>
    <name type="common">Verticillium wilt of alfalfa</name>
    <name type="synonym">Verticillium albo-atrum</name>
    <dbReference type="NCBI Taxonomy" id="526221"/>
    <lineage>
        <taxon>Eukaryota</taxon>
        <taxon>Fungi</taxon>
        <taxon>Dikarya</taxon>
        <taxon>Ascomycota</taxon>
        <taxon>Pezizomycotina</taxon>
        <taxon>Sordariomycetes</taxon>
        <taxon>Hypocreomycetidae</taxon>
        <taxon>Glomerellales</taxon>
        <taxon>Plectosphaerellaceae</taxon>
        <taxon>Verticillium</taxon>
    </lineage>
</organism>
<gene>
    <name type="primary">SHO1</name>
    <name type="ORF">VDBG_02327</name>
</gene>
<keyword id="KW-1003">Cell membrane</keyword>
<keyword id="KW-0472">Membrane</keyword>
<keyword id="KW-1185">Reference proteome</keyword>
<keyword id="KW-0728">SH3 domain</keyword>
<keyword id="KW-0346">Stress response</keyword>
<keyword id="KW-0812">Transmembrane</keyword>
<keyword id="KW-1133">Transmembrane helix</keyword>
<protein>
    <recommendedName>
        <fullName>High osmolarity signaling protein SHO1</fullName>
    </recommendedName>
    <alternativeName>
        <fullName>Osmosensor SHO1</fullName>
    </alternativeName>
</protein>